<name>PANC_HERA2</name>
<accession>A9B3W0</accession>
<sequence length="276" mass="30089">MQVVTTIEEVRAARRQWAEVGFVPTMGFLHAGHLSLVQQSKAENGVAIASIFVNPTQFGPNEDFASYPRDTPRDLALLEAAGCDLVWMPSVEEIYPAGFSSYVEVEGVTAPLEGARRPGHFRGVATVVTKLFNVVQPTKAYFGQKDAQQTVVIRQFVRDLAMPVEVVIAPTIREADGLAMSSRNSYLNAEQRAAAPVLYRALTAAQTAYAAGQTDAEAIRQLMLETLAQEPLAQVDYVSIADPRSLQELTTIDQQGVLVSLAVRIGKTRLIDNLVM</sequence>
<feature type="chain" id="PRO_1000097075" description="Pantothenate synthetase">
    <location>
        <begin position="1"/>
        <end position="276"/>
    </location>
</feature>
<feature type="active site" description="Proton donor" evidence="1">
    <location>
        <position position="33"/>
    </location>
</feature>
<feature type="binding site" evidence="1">
    <location>
        <begin position="26"/>
        <end position="33"/>
    </location>
    <ligand>
        <name>ATP</name>
        <dbReference type="ChEBI" id="CHEBI:30616"/>
    </ligand>
</feature>
<feature type="binding site" evidence="1">
    <location>
        <position position="57"/>
    </location>
    <ligand>
        <name>(R)-pantoate</name>
        <dbReference type="ChEBI" id="CHEBI:15980"/>
    </ligand>
</feature>
<feature type="binding site" evidence="1">
    <location>
        <position position="57"/>
    </location>
    <ligand>
        <name>beta-alanine</name>
        <dbReference type="ChEBI" id="CHEBI:57966"/>
    </ligand>
</feature>
<feature type="binding site" evidence="1">
    <location>
        <begin position="143"/>
        <end position="146"/>
    </location>
    <ligand>
        <name>ATP</name>
        <dbReference type="ChEBI" id="CHEBI:30616"/>
    </ligand>
</feature>
<feature type="binding site" evidence="1">
    <location>
        <position position="149"/>
    </location>
    <ligand>
        <name>(R)-pantoate</name>
        <dbReference type="ChEBI" id="CHEBI:15980"/>
    </ligand>
</feature>
<feature type="binding site" evidence="1">
    <location>
        <position position="172"/>
    </location>
    <ligand>
        <name>ATP</name>
        <dbReference type="ChEBI" id="CHEBI:30616"/>
    </ligand>
</feature>
<feature type="binding site" evidence="1">
    <location>
        <begin position="180"/>
        <end position="183"/>
    </location>
    <ligand>
        <name>ATP</name>
        <dbReference type="ChEBI" id="CHEBI:30616"/>
    </ligand>
</feature>
<gene>
    <name evidence="1" type="primary">panC</name>
    <name type="ordered locus">Haur_3460</name>
</gene>
<reference key="1">
    <citation type="journal article" date="2011" name="Stand. Genomic Sci.">
        <title>Complete genome sequence of the filamentous gliding predatory bacterium Herpetosiphon aurantiacus type strain (114-95(T)).</title>
        <authorList>
            <person name="Kiss H."/>
            <person name="Nett M."/>
            <person name="Domin N."/>
            <person name="Martin K."/>
            <person name="Maresca J.A."/>
            <person name="Copeland A."/>
            <person name="Lapidus A."/>
            <person name="Lucas S."/>
            <person name="Berry K.W."/>
            <person name="Glavina Del Rio T."/>
            <person name="Dalin E."/>
            <person name="Tice H."/>
            <person name="Pitluck S."/>
            <person name="Richardson P."/>
            <person name="Bruce D."/>
            <person name="Goodwin L."/>
            <person name="Han C."/>
            <person name="Detter J.C."/>
            <person name="Schmutz J."/>
            <person name="Brettin T."/>
            <person name="Land M."/>
            <person name="Hauser L."/>
            <person name="Kyrpides N.C."/>
            <person name="Ivanova N."/>
            <person name="Goeker M."/>
            <person name="Woyke T."/>
            <person name="Klenk H.P."/>
            <person name="Bryant D.A."/>
        </authorList>
    </citation>
    <scope>NUCLEOTIDE SEQUENCE [LARGE SCALE GENOMIC DNA]</scope>
    <source>
        <strain>ATCC 23779 / DSM 785 / 114-95</strain>
    </source>
</reference>
<proteinExistence type="inferred from homology"/>
<keyword id="KW-0067">ATP-binding</keyword>
<keyword id="KW-0963">Cytoplasm</keyword>
<keyword id="KW-0436">Ligase</keyword>
<keyword id="KW-0547">Nucleotide-binding</keyword>
<keyword id="KW-0566">Pantothenate biosynthesis</keyword>
<evidence type="ECO:0000255" key="1">
    <source>
        <dbReference type="HAMAP-Rule" id="MF_00158"/>
    </source>
</evidence>
<protein>
    <recommendedName>
        <fullName evidence="1">Pantothenate synthetase</fullName>
        <shortName evidence="1">PS</shortName>
        <ecNumber evidence="1">6.3.2.1</ecNumber>
    </recommendedName>
    <alternativeName>
        <fullName evidence="1">Pantoate--beta-alanine ligase</fullName>
    </alternativeName>
    <alternativeName>
        <fullName evidence="1">Pantoate-activating enzyme</fullName>
    </alternativeName>
</protein>
<dbReference type="EC" id="6.3.2.1" evidence="1"/>
<dbReference type="EMBL" id="CP000875">
    <property type="protein sequence ID" value="ABX06096.1"/>
    <property type="molecule type" value="Genomic_DNA"/>
</dbReference>
<dbReference type="SMR" id="A9B3W0"/>
<dbReference type="FunCoup" id="A9B3W0">
    <property type="interactions" value="526"/>
</dbReference>
<dbReference type="STRING" id="316274.Haur_3460"/>
<dbReference type="KEGG" id="hau:Haur_3460"/>
<dbReference type="eggNOG" id="COG0414">
    <property type="taxonomic scope" value="Bacteria"/>
</dbReference>
<dbReference type="HOGENOM" id="CLU_047148_0_0_0"/>
<dbReference type="InParanoid" id="A9B3W0"/>
<dbReference type="UniPathway" id="UPA00028">
    <property type="reaction ID" value="UER00005"/>
</dbReference>
<dbReference type="Proteomes" id="UP000000787">
    <property type="component" value="Chromosome"/>
</dbReference>
<dbReference type="GO" id="GO:0005829">
    <property type="term" value="C:cytosol"/>
    <property type="evidence" value="ECO:0007669"/>
    <property type="project" value="TreeGrafter"/>
</dbReference>
<dbReference type="GO" id="GO:0005524">
    <property type="term" value="F:ATP binding"/>
    <property type="evidence" value="ECO:0007669"/>
    <property type="project" value="UniProtKB-KW"/>
</dbReference>
<dbReference type="GO" id="GO:0004592">
    <property type="term" value="F:pantoate-beta-alanine ligase activity"/>
    <property type="evidence" value="ECO:0007669"/>
    <property type="project" value="UniProtKB-UniRule"/>
</dbReference>
<dbReference type="GO" id="GO:0015940">
    <property type="term" value="P:pantothenate biosynthetic process"/>
    <property type="evidence" value="ECO:0007669"/>
    <property type="project" value="UniProtKB-UniRule"/>
</dbReference>
<dbReference type="CDD" id="cd00560">
    <property type="entry name" value="PanC"/>
    <property type="match status" value="1"/>
</dbReference>
<dbReference type="FunFam" id="3.30.1300.10:FF:000001">
    <property type="entry name" value="Pantothenate synthetase"/>
    <property type="match status" value="1"/>
</dbReference>
<dbReference type="FunFam" id="3.40.50.620:FF:000013">
    <property type="entry name" value="Pantothenate synthetase"/>
    <property type="match status" value="1"/>
</dbReference>
<dbReference type="Gene3D" id="3.40.50.620">
    <property type="entry name" value="HUPs"/>
    <property type="match status" value="1"/>
</dbReference>
<dbReference type="Gene3D" id="3.30.1300.10">
    <property type="entry name" value="Pantoate-beta-alanine ligase, C-terminal domain"/>
    <property type="match status" value="1"/>
</dbReference>
<dbReference type="HAMAP" id="MF_00158">
    <property type="entry name" value="PanC"/>
    <property type="match status" value="1"/>
</dbReference>
<dbReference type="InterPro" id="IPR003721">
    <property type="entry name" value="Pantoate_ligase"/>
</dbReference>
<dbReference type="InterPro" id="IPR042176">
    <property type="entry name" value="Pantoate_ligase_C"/>
</dbReference>
<dbReference type="InterPro" id="IPR014729">
    <property type="entry name" value="Rossmann-like_a/b/a_fold"/>
</dbReference>
<dbReference type="NCBIfam" id="TIGR00018">
    <property type="entry name" value="panC"/>
    <property type="match status" value="1"/>
</dbReference>
<dbReference type="PANTHER" id="PTHR21299">
    <property type="entry name" value="CYTIDYLATE KINASE/PANTOATE-BETA-ALANINE LIGASE"/>
    <property type="match status" value="1"/>
</dbReference>
<dbReference type="PANTHER" id="PTHR21299:SF1">
    <property type="entry name" value="PANTOATE--BETA-ALANINE LIGASE"/>
    <property type="match status" value="1"/>
</dbReference>
<dbReference type="Pfam" id="PF02569">
    <property type="entry name" value="Pantoate_ligase"/>
    <property type="match status" value="1"/>
</dbReference>
<dbReference type="SUPFAM" id="SSF52374">
    <property type="entry name" value="Nucleotidylyl transferase"/>
    <property type="match status" value="1"/>
</dbReference>
<comment type="function">
    <text evidence="1">Catalyzes the condensation of pantoate with beta-alanine in an ATP-dependent reaction via a pantoyl-adenylate intermediate.</text>
</comment>
<comment type="catalytic activity">
    <reaction evidence="1">
        <text>(R)-pantoate + beta-alanine + ATP = (R)-pantothenate + AMP + diphosphate + H(+)</text>
        <dbReference type="Rhea" id="RHEA:10912"/>
        <dbReference type="ChEBI" id="CHEBI:15378"/>
        <dbReference type="ChEBI" id="CHEBI:15980"/>
        <dbReference type="ChEBI" id="CHEBI:29032"/>
        <dbReference type="ChEBI" id="CHEBI:30616"/>
        <dbReference type="ChEBI" id="CHEBI:33019"/>
        <dbReference type="ChEBI" id="CHEBI:57966"/>
        <dbReference type="ChEBI" id="CHEBI:456215"/>
        <dbReference type="EC" id="6.3.2.1"/>
    </reaction>
</comment>
<comment type="pathway">
    <text evidence="1">Cofactor biosynthesis; (R)-pantothenate biosynthesis; (R)-pantothenate from (R)-pantoate and beta-alanine: step 1/1.</text>
</comment>
<comment type="subunit">
    <text evidence="1">Homodimer.</text>
</comment>
<comment type="subcellular location">
    <subcellularLocation>
        <location evidence="1">Cytoplasm</location>
    </subcellularLocation>
</comment>
<comment type="miscellaneous">
    <text evidence="1">The reaction proceeds by a bi uni uni bi ping pong mechanism.</text>
</comment>
<comment type="similarity">
    <text evidence="1">Belongs to the pantothenate synthetase family.</text>
</comment>
<organism>
    <name type="scientific">Herpetosiphon aurantiacus (strain ATCC 23779 / DSM 785 / 114-95)</name>
    <dbReference type="NCBI Taxonomy" id="316274"/>
    <lineage>
        <taxon>Bacteria</taxon>
        <taxon>Bacillati</taxon>
        <taxon>Chloroflexota</taxon>
        <taxon>Chloroflexia</taxon>
        <taxon>Herpetosiphonales</taxon>
        <taxon>Herpetosiphonaceae</taxon>
        <taxon>Herpetosiphon</taxon>
    </lineage>
</organism>